<accession>Q820A9</accession>
<gene>
    <name evidence="1" type="primary">prmA</name>
    <name type="ordered locus">EF_1976</name>
</gene>
<evidence type="ECO:0000255" key="1">
    <source>
        <dbReference type="HAMAP-Rule" id="MF_00735"/>
    </source>
</evidence>
<comment type="function">
    <text evidence="1">Methylates ribosomal protein L11.</text>
</comment>
<comment type="catalytic activity">
    <reaction evidence="1">
        <text>L-lysyl-[protein] + 3 S-adenosyl-L-methionine = N(6),N(6),N(6)-trimethyl-L-lysyl-[protein] + 3 S-adenosyl-L-homocysteine + 3 H(+)</text>
        <dbReference type="Rhea" id="RHEA:54192"/>
        <dbReference type="Rhea" id="RHEA-COMP:9752"/>
        <dbReference type="Rhea" id="RHEA-COMP:13826"/>
        <dbReference type="ChEBI" id="CHEBI:15378"/>
        <dbReference type="ChEBI" id="CHEBI:29969"/>
        <dbReference type="ChEBI" id="CHEBI:57856"/>
        <dbReference type="ChEBI" id="CHEBI:59789"/>
        <dbReference type="ChEBI" id="CHEBI:61961"/>
    </reaction>
</comment>
<comment type="subcellular location">
    <subcellularLocation>
        <location evidence="1">Cytoplasm</location>
    </subcellularLocation>
</comment>
<comment type="similarity">
    <text evidence="1">Belongs to the methyltransferase superfamily. PrmA family.</text>
</comment>
<protein>
    <recommendedName>
        <fullName evidence="1">Ribosomal protein L11 methyltransferase</fullName>
        <shortName evidence="1">L11 Mtase</shortName>
        <ecNumber evidence="1">2.1.1.-</ecNumber>
    </recommendedName>
</protein>
<dbReference type="EC" id="2.1.1.-" evidence="1"/>
<dbReference type="EMBL" id="AE016830">
    <property type="protein sequence ID" value="AAO81722.1"/>
    <property type="molecule type" value="Genomic_DNA"/>
</dbReference>
<dbReference type="RefSeq" id="NP_815652.1">
    <property type="nucleotide sequence ID" value="NC_004668.1"/>
</dbReference>
<dbReference type="RefSeq" id="WP_011109511.1">
    <property type="nucleotide sequence ID" value="NC_004668.1"/>
</dbReference>
<dbReference type="SMR" id="Q820A9"/>
<dbReference type="STRING" id="226185.EF_1976"/>
<dbReference type="EnsemblBacteria" id="AAO81722">
    <property type="protein sequence ID" value="AAO81722"/>
    <property type="gene ID" value="EF_1976"/>
</dbReference>
<dbReference type="KEGG" id="efa:EF1976"/>
<dbReference type="PATRIC" id="fig|226185.9.peg.1853"/>
<dbReference type="eggNOG" id="COG2264">
    <property type="taxonomic scope" value="Bacteria"/>
</dbReference>
<dbReference type="HOGENOM" id="CLU_049382_0_1_9"/>
<dbReference type="Proteomes" id="UP000001415">
    <property type="component" value="Chromosome"/>
</dbReference>
<dbReference type="GO" id="GO:0005737">
    <property type="term" value="C:cytoplasm"/>
    <property type="evidence" value="ECO:0007669"/>
    <property type="project" value="UniProtKB-SubCell"/>
</dbReference>
<dbReference type="GO" id="GO:0016279">
    <property type="term" value="F:protein-lysine N-methyltransferase activity"/>
    <property type="evidence" value="ECO:0007669"/>
    <property type="project" value="RHEA"/>
</dbReference>
<dbReference type="GO" id="GO:0032259">
    <property type="term" value="P:methylation"/>
    <property type="evidence" value="ECO:0007669"/>
    <property type="project" value="UniProtKB-KW"/>
</dbReference>
<dbReference type="CDD" id="cd02440">
    <property type="entry name" value="AdoMet_MTases"/>
    <property type="match status" value="1"/>
</dbReference>
<dbReference type="Gene3D" id="3.40.50.150">
    <property type="entry name" value="Vaccinia Virus protein VP39"/>
    <property type="match status" value="1"/>
</dbReference>
<dbReference type="HAMAP" id="MF_00735">
    <property type="entry name" value="Methyltr_PrmA"/>
    <property type="match status" value="1"/>
</dbReference>
<dbReference type="InterPro" id="IPR050078">
    <property type="entry name" value="Ribosomal_L11_MeTrfase_PrmA"/>
</dbReference>
<dbReference type="InterPro" id="IPR004498">
    <property type="entry name" value="Ribosomal_PrmA_MeTrfase"/>
</dbReference>
<dbReference type="InterPro" id="IPR029063">
    <property type="entry name" value="SAM-dependent_MTases_sf"/>
</dbReference>
<dbReference type="NCBIfam" id="TIGR00406">
    <property type="entry name" value="prmA"/>
    <property type="match status" value="1"/>
</dbReference>
<dbReference type="PANTHER" id="PTHR43648">
    <property type="entry name" value="ELECTRON TRANSFER FLAVOPROTEIN BETA SUBUNIT LYSINE METHYLTRANSFERASE"/>
    <property type="match status" value="1"/>
</dbReference>
<dbReference type="PANTHER" id="PTHR43648:SF1">
    <property type="entry name" value="ELECTRON TRANSFER FLAVOPROTEIN BETA SUBUNIT LYSINE METHYLTRANSFERASE"/>
    <property type="match status" value="1"/>
</dbReference>
<dbReference type="Pfam" id="PF06325">
    <property type="entry name" value="PrmA"/>
    <property type="match status" value="1"/>
</dbReference>
<dbReference type="PIRSF" id="PIRSF000401">
    <property type="entry name" value="RPL11_MTase"/>
    <property type="match status" value="1"/>
</dbReference>
<dbReference type="SUPFAM" id="SSF53335">
    <property type="entry name" value="S-adenosyl-L-methionine-dependent methyltransferases"/>
    <property type="match status" value="1"/>
</dbReference>
<sequence>MKWTEVKVETASEAVEAISNIMMEAGASGVAIEDALDIENFESDLYGEILDKEQFTHIKEGAIVMAYFPETTFLTEILPFMKENILRLPEYGLSIGKNEMTISEVAESDWATAWKKYYHPVRVTRFLTIVPSWEAYHAQDEAEKIITLDPGMAFGTGTHPTTRLTLQALETVLRGGETVLDVGTGSGVLSIASRYLGAKDVYAYDLDEVAVAAAKENMDLNPIAADVHVSANDLLKGIDHSADVIVANILADIIVLMIEDAWRLLKQDGTFIISGIIEDKKAMVLEALTKVGFVVDQLFNQGDWYAIILKKPEEE</sequence>
<feature type="chain" id="PRO_0000192260" description="Ribosomal protein L11 methyltransferase">
    <location>
        <begin position="1"/>
        <end position="315"/>
    </location>
</feature>
<feature type="binding site" evidence="1">
    <location>
        <position position="162"/>
    </location>
    <ligand>
        <name>S-adenosyl-L-methionine</name>
        <dbReference type="ChEBI" id="CHEBI:59789"/>
    </ligand>
</feature>
<feature type="binding site" evidence="1">
    <location>
        <position position="183"/>
    </location>
    <ligand>
        <name>S-adenosyl-L-methionine</name>
        <dbReference type="ChEBI" id="CHEBI:59789"/>
    </ligand>
</feature>
<feature type="binding site" evidence="1">
    <location>
        <position position="205"/>
    </location>
    <ligand>
        <name>S-adenosyl-L-methionine</name>
        <dbReference type="ChEBI" id="CHEBI:59789"/>
    </ligand>
</feature>
<feature type="binding site" evidence="1">
    <location>
        <position position="248"/>
    </location>
    <ligand>
        <name>S-adenosyl-L-methionine</name>
        <dbReference type="ChEBI" id="CHEBI:59789"/>
    </ligand>
</feature>
<reference key="1">
    <citation type="journal article" date="2003" name="Science">
        <title>Role of mobile DNA in the evolution of vancomycin-resistant Enterococcus faecalis.</title>
        <authorList>
            <person name="Paulsen I.T."/>
            <person name="Banerjei L."/>
            <person name="Myers G.S.A."/>
            <person name="Nelson K.E."/>
            <person name="Seshadri R."/>
            <person name="Read T.D."/>
            <person name="Fouts D.E."/>
            <person name="Eisen J.A."/>
            <person name="Gill S.R."/>
            <person name="Heidelberg J.F."/>
            <person name="Tettelin H."/>
            <person name="Dodson R.J."/>
            <person name="Umayam L.A."/>
            <person name="Brinkac L.M."/>
            <person name="Beanan M.J."/>
            <person name="Daugherty S.C."/>
            <person name="DeBoy R.T."/>
            <person name="Durkin S.A."/>
            <person name="Kolonay J.F."/>
            <person name="Madupu R."/>
            <person name="Nelson W.C."/>
            <person name="Vamathevan J.J."/>
            <person name="Tran B."/>
            <person name="Upton J."/>
            <person name="Hansen T."/>
            <person name="Shetty J."/>
            <person name="Khouri H.M."/>
            <person name="Utterback T.R."/>
            <person name="Radune D."/>
            <person name="Ketchum K.A."/>
            <person name="Dougherty B.A."/>
            <person name="Fraser C.M."/>
        </authorList>
    </citation>
    <scope>NUCLEOTIDE SEQUENCE [LARGE SCALE GENOMIC DNA]</scope>
    <source>
        <strain>ATCC 700802 / V583</strain>
    </source>
</reference>
<name>PRMA_ENTFA</name>
<keyword id="KW-0963">Cytoplasm</keyword>
<keyword id="KW-0489">Methyltransferase</keyword>
<keyword id="KW-1185">Reference proteome</keyword>
<keyword id="KW-0949">S-adenosyl-L-methionine</keyword>
<keyword id="KW-0808">Transferase</keyword>
<organism>
    <name type="scientific">Enterococcus faecalis (strain ATCC 700802 / V583)</name>
    <dbReference type="NCBI Taxonomy" id="226185"/>
    <lineage>
        <taxon>Bacteria</taxon>
        <taxon>Bacillati</taxon>
        <taxon>Bacillota</taxon>
        <taxon>Bacilli</taxon>
        <taxon>Lactobacillales</taxon>
        <taxon>Enterococcaceae</taxon>
        <taxon>Enterococcus</taxon>
    </lineage>
</organism>
<proteinExistence type="inferred from homology"/>